<accession>Q17820</accession>
<dbReference type="EMBL" id="Z72502">
    <property type="protein sequence ID" value="CAA96591.1"/>
    <property type="molecule type" value="Genomic_DNA"/>
</dbReference>
<dbReference type="PIR" id="T19082">
    <property type="entry name" value="T19082"/>
</dbReference>
<dbReference type="RefSeq" id="NP_505604.1">
    <property type="nucleotide sequence ID" value="NM_073203.4"/>
</dbReference>
<dbReference type="SMR" id="Q17820"/>
<dbReference type="BioGRID" id="44440">
    <property type="interactions" value="10"/>
</dbReference>
<dbReference type="FunCoup" id="Q17820">
    <property type="interactions" value="3172"/>
</dbReference>
<dbReference type="IntAct" id="Q17820">
    <property type="interactions" value="2"/>
</dbReference>
<dbReference type="STRING" id="6239.C08B6.9.1"/>
<dbReference type="PaxDb" id="6239-C08B6.9"/>
<dbReference type="PeptideAtlas" id="Q17820"/>
<dbReference type="EnsemblMetazoa" id="C08B6.9.1">
    <property type="protein sequence ID" value="C08B6.9.1"/>
    <property type="gene ID" value="WBGene00000142"/>
</dbReference>
<dbReference type="GeneID" id="179409"/>
<dbReference type="KEGG" id="cel:CELE_C08B6.9"/>
<dbReference type="UCSC" id="C08B6.9">
    <property type="organism name" value="c. elegans"/>
</dbReference>
<dbReference type="AGR" id="WB:WBGene00000142"/>
<dbReference type="CTD" id="179409"/>
<dbReference type="WormBase" id="C08B6.9">
    <property type="protein sequence ID" value="CE52896"/>
    <property type="gene ID" value="WBGene00000142"/>
    <property type="gene designation" value="aos-1"/>
</dbReference>
<dbReference type="eggNOG" id="KOG2014">
    <property type="taxonomic scope" value="Eukaryota"/>
</dbReference>
<dbReference type="GeneTree" id="ENSGT00550000075007"/>
<dbReference type="HOGENOM" id="CLU_002556_4_1_1"/>
<dbReference type="InParanoid" id="Q17820"/>
<dbReference type="OMA" id="EFFGQFD"/>
<dbReference type="OrthoDB" id="10252231at2759"/>
<dbReference type="PhylomeDB" id="Q17820"/>
<dbReference type="Reactome" id="R-CEL-3065676">
    <property type="pathway name" value="SUMO is conjugated to E1 (UBA2:SAE1)"/>
</dbReference>
<dbReference type="Reactome" id="R-CEL-3065678">
    <property type="pathway name" value="SUMO is transferred from E1 to E2 (UBE2I, UBC9)"/>
</dbReference>
<dbReference type="UniPathway" id="UPA00886"/>
<dbReference type="PRO" id="PR:Q17820"/>
<dbReference type="Proteomes" id="UP000001940">
    <property type="component" value="Chromosome V"/>
</dbReference>
<dbReference type="Bgee" id="WBGene00000142">
    <property type="expression patterns" value="Expressed in germ line (C elegans) and 4 other cell types or tissues"/>
</dbReference>
<dbReference type="GO" id="GO:0005737">
    <property type="term" value="C:cytoplasm"/>
    <property type="evidence" value="ECO:0000318"/>
    <property type="project" value="GO_Central"/>
</dbReference>
<dbReference type="GO" id="GO:0031510">
    <property type="term" value="C:SUMO activating enzyme complex"/>
    <property type="evidence" value="ECO:0000250"/>
    <property type="project" value="WormBase"/>
</dbReference>
<dbReference type="GO" id="GO:0008641">
    <property type="term" value="F:ubiquitin-like modifier activating enzyme activity"/>
    <property type="evidence" value="ECO:0007669"/>
    <property type="project" value="InterPro"/>
</dbReference>
<dbReference type="GO" id="GO:0016925">
    <property type="term" value="P:protein sumoylation"/>
    <property type="evidence" value="ECO:0000314"/>
    <property type="project" value="WormBase"/>
</dbReference>
<dbReference type="CDD" id="cd01485">
    <property type="entry name" value="E1-1_like"/>
    <property type="match status" value="1"/>
</dbReference>
<dbReference type="FunFam" id="3.40.50.720:FF:001067">
    <property type="entry name" value="SUMO-activating enzyme subunit aos-1"/>
    <property type="match status" value="1"/>
</dbReference>
<dbReference type="Gene3D" id="3.40.50.720">
    <property type="entry name" value="NAD(P)-binding Rossmann-like Domain"/>
    <property type="match status" value="1"/>
</dbReference>
<dbReference type="InterPro" id="IPR045886">
    <property type="entry name" value="ThiF/MoeB/HesA"/>
</dbReference>
<dbReference type="InterPro" id="IPR000594">
    <property type="entry name" value="ThiF_NAD_FAD-bd"/>
</dbReference>
<dbReference type="InterPro" id="IPR035985">
    <property type="entry name" value="Ubiquitin-activating_enz"/>
</dbReference>
<dbReference type="PANTHER" id="PTHR10953:SF162">
    <property type="entry name" value="SUMO-ACTIVATING ENZYME SUBUNIT 1"/>
    <property type="match status" value="1"/>
</dbReference>
<dbReference type="PANTHER" id="PTHR10953">
    <property type="entry name" value="UBIQUITIN-ACTIVATING ENZYME E1"/>
    <property type="match status" value="1"/>
</dbReference>
<dbReference type="Pfam" id="PF00899">
    <property type="entry name" value="ThiF"/>
    <property type="match status" value="1"/>
</dbReference>
<dbReference type="SUPFAM" id="SSF69572">
    <property type="entry name" value="Activating enzymes of the ubiquitin-like proteins"/>
    <property type="match status" value="1"/>
</dbReference>
<organism>
    <name type="scientific">Caenorhabditis elegans</name>
    <dbReference type="NCBI Taxonomy" id="6239"/>
    <lineage>
        <taxon>Eukaryota</taxon>
        <taxon>Metazoa</taxon>
        <taxon>Ecdysozoa</taxon>
        <taxon>Nematoda</taxon>
        <taxon>Chromadorea</taxon>
        <taxon>Rhabditida</taxon>
        <taxon>Rhabditina</taxon>
        <taxon>Rhabditomorpha</taxon>
        <taxon>Rhabditoidea</taxon>
        <taxon>Rhabditidae</taxon>
        <taxon>Peloderinae</taxon>
        <taxon>Caenorhabditis</taxon>
    </lineage>
</organism>
<keyword id="KW-0436">Ligase</keyword>
<keyword id="KW-1185">Reference proteome</keyword>
<keyword id="KW-0833">Ubl conjugation pathway</keyword>
<gene>
    <name type="primary">aos-1</name>
    <name type="ORF">C08B6.9</name>
</gene>
<feature type="chain" id="PRO_0000270189" description="SUMO-activating enzyme subunit aos-1">
    <location>
        <begin position="1"/>
        <end position="343"/>
    </location>
</feature>
<sequence>MEVSKAEQAIYDRQIRLWGMEAQNKIRNSKVLIIGGKQLGAEVAKTLSLAGVDEMHLVDHRLVDTEEIGMNFLYDASVDNSKMTKWAASYNFLYNLNRNVKLFIVEEDVLSKNDSEIEEYLTKFTLVVVLDESYERTAKVNNICRKHHIRFISGAIYGWIGYAFFDFDGHAYLVKAKSPDCLNEEESETGKTSTVVTVDEEFVLETFSYPSFVETLNSDFTAKKIVRKCKRIVPTSYFLVKSMLRASSENKLTGVTENDIEKLIPIWNEEVAAGNHTIDMQPVQPDRFDHLFGPNFGPTAACVGGVIGQEAIKSISEGKNPLRNLFIYTGFESTGFMCNFPPV</sequence>
<reference key="1">
    <citation type="journal article" date="1998" name="Science">
        <title>Genome sequence of the nematode C. elegans: a platform for investigating biology.</title>
        <authorList>
            <consortium name="The C. elegans sequencing consortium"/>
        </authorList>
    </citation>
    <scope>NUCLEOTIDE SEQUENCE [LARGE SCALE GENOMIC DNA]</scope>
    <source>
        <strain>Bristol N2</strain>
    </source>
</reference>
<reference key="2">
    <citation type="journal article" date="2002" name="Genome Biol.">
        <title>Functional and phylogenetic analysis of the ubiquitylation system in Caenorhabditis elegans: ubiquitin-conjugating enzymes, ubiquitin-activating enzymes, and ubiquitin-like proteins.</title>
        <authorList>
            <person name="Jones D."/>
            <person name="Crowe E."/>
            <person name="Stevens T.A."/>
            <person name="Candido E.P.M."/>
        </authorList>
    </citation>
    <scope>FUNCTION</scope>
</reference>
<reference key="3">
    <citation type="journal article" date="2004" name="Nat. Genet.">
        <title>SUMO modification is required for in vivo Hox gene regulation by the Caenorhabditis elegans Polycomb group protein SOP-2.</title>
        <authorList>
            <person name="Zhang H."/>
            <person name="Smolen G.A."/>
            <person name="Palmer R."/>
            <person name="Christoforou A."/>
            <person name="van den Heuvel S."/>
            <person name="Haber D.A."/>
        </authorList>
    </citation>
    <scope>FUNCTION</scope>
</reference>
<evidence type="ECO:0000305" key="1"/>
<evidence type="ECO:0000305" key="2">
    <source>
    </source>
</evidence>
<evidence type="ECO:0000305" key="3">
    <source>
    </source>
</evidence>
<proteinExistence type="inferred from homology"/>
<comment type="function">
    <text evidence="2 3">The dimeric enzyme acts as an E1 ligase for smo-1. It mediates ATP-dependent activation of smo-1 and formation of a thioester with a conserved cysteine residue on uba-2 (Probable).</text>
</comment>
<comment type="pathway">
    <text>Protein modification; protein sumoylation.</text>
</comment>
<comment type="subunit">
    <text>Heterodimer of aos-1 and uba-2.</text>
</comment>
<comment type="similarity">
    <text evidence="1">Belongs to the ubiquitin-activating E1 family.</text>
</comment>
<name>SAE1_CAEEL</name>
<protein>
    <recommendedName>
        <fullName>SUMO-activating enzyme subunit aos-1</fullName>
    </recommendedName>
</protein>